<keyword id="KW-0067">ATP-binding</keyword>
<keyword id="KW-0963">Cytoplasm</keyword>
<keyword id="KW-0418">Kinase</keyword>
<keyword id="KW-0520">NAD</keyword>
<keyword id="KW-0521">NADP</keyword>
<keyword id="KW-0547">Nucleotide-binding</keyword>
<keyword id="KW-0808">Transferase</keyword>
<evidence type="ECO:0000255" key="1">
    <source>
        <dbReference type="HAMAP-Rule" id="MF_00361"/>
    </source>
</evidence>
<evidence type="ECO:0000305" key="2"/>
<reference key="1">
    <citation type="journal article" date="2002" name="Proc. Natl. Acad. Sci. U.S.A.">
        <title>The Brucella suis genome reveals fundamental similarities between animal and plant pathogens and symbionts.</title>
        <authorList>
            <person name="Paulsen I.T."/>
            <person name="Seshadri R."/>
            <person name="Nelson K.E."/>
            <person name="Eisen J.A."/>
            <person name="Heidelberg J.F."/>
            <person name="Read T.D."/>
            <person name="Dodson R.J."/>
            <person name="Umayam L.A."/>
            <person name="Brinkac L.M."/>
            <person name="Beanan M.J."/>
            <person name="Daugherty S.C."/>
            <person name="DeBoy R.T."/>
            <person name="Durkin A.S."/>
            <person name="Kolonay J.F."/>
            <person name="Madupu R."/>
            <person name="Nelson W.C."/>
            <person name="Ayodeji B."/>
            <person name="Kraul M."/>
            <person name="Shetty J."/>
            <person name="Malek J.A."/>
            <person name="Van Aken S.E."/>
            <person name="Riedmuller S."/>
            <person name="Tettelin H."/>
            <person name="Gill S.R."/>
            <person name="White O."/>
            <person name="Salzberg S.L."/>
            <person name="Hoover D.L."/>
            <person name="Lindler L.E."/>
            <person name="Halling S.M."/>
            <person name="Boyle S.M."/>
            <person name="Fraser C.M."/>
        </authorList>
    </citation>
    <scope>NUCLEOTIDE SEQUENCE [LARGE SCALE GENOMIC DNA]</scope>
    <source>
        <strain>1330</strain>
    </source>
</reference>
<reference key="2">
    <citation type="journal article" date="2011" name="J. Bacteriol.">
        <title>Revised genome sequence of Brucella suis 1330.</title>
        <authorList>
            <person name="Tae H."/>
            <person name="Shallom S."/>
            <person name="Settlage R."/>
            <person name="Preston D."/>
            <person name="Adams L.G."/>
            <person name="Garner H.R."/>
        </authorList>
    </citation>
    <scope>NUCLEOTIDE SEQUENCE [LARGE SCALE GENOMIC DNA]</scope>
    <source>
        <strain>1330</strain>
    </source>
</reference>
<name>NADK_BRUSU</name>
<protein>
    <recommendedName>
        <fullName evidence="1">NAD kinase</fullName>
        <ecNumber evidence="1">2.7.1.23</ecNumber>
    </recommendedName>
    <alternativeName>
        <fullName evidence="1">ATP-dependent NAD kinase</fullName>
    </alternativeName>
</protein>
<feature type="chain" id="PRO_0000120604" description="NAD kinase">
    <location>
        <begin position="1"/>
        <end position="257"/>
    </location>
</feature>
<feature type="active site" description="Proton acceptor" evidence="1">
    <location>
        <position position="46"/>
    </location>
</feature>
<feature type="binding site" evidence="1">
    <location>
        <begin position="46"/>
        <end position="47"/>
    </location>
    <ligand>
        <name>NAD(+)</name>
        <dbReference type="ChEBI" id="CHEBI:57540"/>
    </ligand>
</feature>
<feature type="binding site" evidence="1">
    <location>
        <begin position="116"/>
        <end position="117"/>
    </location>
    <ligand>
        <name>NAD(+)</name>
        <dbReference type="ChEBI" id="CHEBI:57540"/>
    </ligand>
</feature>
<feature type="binding site" evidence="1">
    <location>
        <position position="146"/>
    </location>
    <ligand>
        <name>NAD(+)</name>
        <dbReference type="ChEBI" id="CHEBI:57540"/>
    </ligand>
</feature>
<feature type="binding site" evidence="1">
    <location>
        <position position="154"/>
    </location>
    <ligand>
        <name>NAD(+)</name>
        <dbReference type="ChEBI" id="CHEBI:57540"/>
    </ligand>
</feature>
<feature type="binding site" evidence="1">
    <location>
        <begin position="157"/>
        <end position="162"/>
    </location>
    <ligand>
        <name>NAD(+)</name>
        <dbReference type="ChEBI" id="CHEBI:57540"/>
    </ligand>
</feature>
<feature type="binding site" evidence="1">
    <location>
        <position position="218"/>
    </location>
    <ligand>
        <name>NAD(+)</name>
        <dbReference type="ChEBI" id="CHEBI:57540"/>
    </ligand>
</feature>
<proteinExistence type="inferred from homology"/>
<sequence length="257" mass="28275">MKDTSLALHFVSSGTKESLSAQKDLVERYGHVAAEDADIIVALGGDGTMLQALRDFMNTGKPIYGMNRGSVGFLMNEFVIENLPERILAAQMETIRPLVMVAETEDAPPVEALAINEVSLFRQSYQAARIRITIDGKVRLQELVCDGVMVATPAGSTAYNLSAQGPILPLEAPLLALTPVSPFRPRRWGGALLPKHVTVRMDLLETEKRPVNAVADNNEVKSVTSVTVREAPNSQVTILFDKNHSWDERILTEQFRH</sequence>
<gene>
    <name evidence="1" type="primary">nadK</name>
    <name type="ordered locus">BR0937</name>
    <name type="ordered locus">BS1330_I0933</name>
</gene>
<organism>
    <name type="scientific">Brucella suis biovar 1 (strain 1330)</name>
    <dbReference type="NCBI Taxonomy" id="204722"/>
    <lineage>
        <taxon>Bacteria</taxon>
        <taxon>Pseudomonadati</taxon>
        <taxon>Pseudomonadota</taxon>
        <taxon>Alphaproteobacteria</taxon>
        <taxon>Hyphomicrobiales</taxon>
        <taxon>Brucellaceae</taxon>
        <taxon>Brucella/Ochrobactrum group</taxon>
        <taxon>Brucella</taxon>
    </lineage>
</organism>
<comment type="function">
    <text evidence="1">Involved in the regulation of the intracellular balance of NAD and NADP, and is a key enzyme in the biosynthesis of NADP. Catalyzes specifically the phosphorylation on 2'-hydroxyl of the adenosine moiety of NAD to yield NADP.</text>
</comment>
<comment type="catalytic activity">
    <reaction evidence="1">
        <text>NAD(+) + ATP = ADP + NADP(+) + H(+)</text>
        <dbReference type="Rhea" id="RHEA:18629"/>
        <dbReference type="ChEBI" id="CHEBI:15378"/>
        <dbReference type="ChEBI" id="CHEBI:30616"/>
        <dbReference type="ChEBI" id="CHEBI:57540"/>
        <dbReference type="ChEBI" id="CHEBI:58349"/>
        <dbReference type="ChEBI" id="CHEBI:456216"/>
        <dbReference type="EC" id="2.7.1.23"/>
    </reaction>
</comment>
<comment type="cofactor">
    <cofactor evidence="1">
        <name>a divalent metal cation</name>
        <dbReference type="ChEBI" id="CHEBI:60240"/>
    </cofactor>
</comment>
<comment type="subcellular location">
    <subcellularLocation>
        <location evidence="1">Cytoplasm</location>
    </subcellularLocation>
</comment>
<comment type="similarity">
    <text evidence="1">Belongs to the NAD kinase family.</text>
</comment>
<comment type="sequence caution" evidence="2">
    <conflict type="erroneous initiation">
        <sequence resource="EMBL-CDS" id="AAN29863"/>
    </conflict>
    <text>Extended N-terminus.</text>
</comment>
<comment type="sequence caution" evidence="2">
    <conflict type="erroneous initiation">
        <sequence resource="EMBL-CDS" id="AEM18280"/>
    </conflict>
    <text>Extended N-terminus.</text>
</comment>
<accession>Q8G0Z4</accession>
<accession>G0K9L4</accession>
<dbReference type="EC" id="2.7.1.23" evidence="1"/>
<dbReference type="EMBL" id="AE014291">
    <property type="protein sequence ID" value="AAN29863.1"/>
    <property type="status" value="ALT_INIT"/>
    <property type="molecule type" value="Genomic_DNA"/>
</dbReference>
<dbReference type="EMBL" id="CP002997">
    <property type="protein sequence ID" value="AEM18280.1"/>
    <property type="status" value="ALT_INIT"/>
    <property type="molecule type" value="Genomic_DNA"/>
</dbReference>
<dbReference type="RefSeq" id="WP_004689657.1">
    <property type="nucleotide sequence ID" value="NZ_KN046804.1"/>
</dbReference>
<dbReference type="SMR" id="Q8G0Z4"/>
<dbReference type="KEGG" id="bms:BR0937"/>
<dbReference type="KEGG" id="bsi:BS1330_I0933"/>
<dbReference type="PATRIC" id="fig|204722.21.peg.3301"/>
<dbReference type="HOGENOM" id="CLU_073319_0_0_5"/>
<dbReference type="PhylomeDB" id="Q8G0Z4"/>
<dbReference type="Proteomes" id="UP000007104">
    <property type="component" value="Chromosome I"/>
</dbReference>
<dbReference type="GO" id="GO:0005737">
    <property type="term" value="C:cytoplasm"/>
    <property type="evidence" value="ECO:0007669"/>
    <property type="project" value="UniProtKB-SubCell"/>
</dbReference>
<dbReference type="GO" id="GO:0005524">
    <property type="term" value="F:ATP binding"/>
    <property type="evidence" value="ECO:0007669"/>
    <property type="project" value="UniProtKB-KW"/>
</dbReference>
<dbReference type="GO" id="GO:0046872">
    <property type="term" value="F:metal ion binding"/>
    <property type="evidence" value="ECO:0007669"/>
    <property type="project" value="UniProtKB-UniRule"/>
</dbReference>
<dbReference type="GO" id="GO:0051287">
    <property type="term" value="F:NAD binding"/>
    <property type="evidence" value="ECO:0007669"/>
    <property type="project" value="UniProtKB-ARBA"/>
</dbReference>
<dbReference type="GO" id="GO:0003951">
    <property type="term" value="F:NAD+ kinase activity"/>
    <property type="evidence" value="ECO:0007669"/>
    <property type="project" value="UniProtKB-UniRule"/>
</dbReference>
<dbReference type="GO" id="GO:0019674">
    <property type="term" value="P:NAD metabolic process"/>
    <property type="evidence" value="ECO:0007669"/>
    <property type="project" value="InterPro"/>
</dbReference>
<dbReference type="GO" id="GO:0006741">
    <property type="term" value="P:NADP biosynthetic process"/>
    <property type="evidence" value="ECO:0007669"/>
    <property type="project" value="UniProtKB-UniRule"/>
</dbReference>
<dbReference type="Gene3D" id="3.40.50.10330">
    <property type="entry name" value="Probable inorganic polyphosphate/atp-NAD kinase, domain 1"/>
    <property type="match status" value="1"/>
</dbReference>
<dbReference type="Gene3D" id="2.60.200.30">
    <property type="entry name" value="Probable inorganic polyphosphate/atp-NAD kinase, domain 2"/>
    <property type="match status" value="1"/>
</dbReference>
<dbReference type="HAMAP" id="MF_00361">
    <property type="entry name" value="NAD_kinase"/>
    <property type="match status" value="1"/>
</dbReference>
<dbReference type="InterPro" id="IPR017438">
    <property type="entry name" value="ATP-NAD_kinase_N"/>
</dbReference>
<dbReference type="InterPro" id="IPR017437">
    <property type="entry name" value="ATP-NAD_kinase_PpnK-typ_C"/>
</dbReference>
<dbReference type="InterPro" id="IPR016064">
    <property type="entry name" value="NAD/diacylglycerol_kinase_sf"/>
</dbReference>
<dbReference type="InterPro" id="IPR002504">
    <property type="entry name" value="NADK"/>
</dbReference>
<dbReference type="NCBIfam" id="NF003406">
    <property type="entry name" value="PRK04761.1"/>
    <property type="match status" value="1"/>
</dbReference>
<dbReference type="PANTHER" id="PTHR20275">
    <property type="entry name" value="NAD KINASE"/>
    <property type="match status" value="1"/>
</dbReference>
<dbReference type="PANTHER" id="PTHR20275:SF0">
    <property type="entry name" value="NAD KINASE"/>
    <property type="match status" value="1"/>
</dbReference>
<dbReference type="Pfam" id="PF01513">
    <property type="entry name" value="NAD_kinase"/>
    <property type="match status" value="1"/>
</dbReference>
<dbReference type="Pfam" id="PF20143">
    <property type="entry name" value="NAD_kinase_C"/>
    <property type="match status" value="1"/>
</dbReference>
<dbReference type="SUPFAM" id="SSF111331">
    <property type="entry name" value="NAD kinase/diacylglycerol kinase-like"/>
    <property type="match status" value="1"/>
</dbReference>